<accession>P0DY04</accession>
<sequence length="72" mass="8079">MKMMIAVFVSILLLMFSLSSTAMGMETEQQNMEERADMDFTGIAESIIKKIKETNAKPPARFDPATFGENED</sequence>
<reference evidence="10" key="1">
    <citation type="journal article" date="2012" name="BMC Genomics">
        <title>Profiling the resting venom gland of the scorpion Tityus stigmurus through a transcriptomic survey.</title>
        <authorList>
            <person name="Almeida D.D."/>
            <person name="Scortecci K.C."/>
            <person name="Kobashi L.S."/>
            <person name="Agnez-Lima L.F."/>
            <person name="Medeiros S.R."/>
            <person name="Silva-Junior A.A."/>
            <person name="Junqueira-de-Azevedo I.L."/>
            <person name="Fernandes-Pedrosa M.F."/>
        </authorList>
    </citation>
    <scope>NUCLEOTIDE SEQUENCE [LARGE SCALE GENOMIC DNA]</scope>
    <source>
        <tissue>Venom gland</tissue>
    </source>
</reference>
<reference key="2">
    <citation type="journal article" date="2015" name="Toxicon">
        <title>Homology modeling, vasorelaxant and bradykinin-potentiating activities of a novel hypotensin found in the scorpion venom from Tityus stigmurus.</title>
        <authorList>
            <person name="Machado R.J."/>
            <person name="Junior L.G."/>
            <person name="Monteiro N.K."/>
            <person name="Silva-Junior A.A."/>
            <person name="Portaro F.C."/>
            <person name="Barbosa E.G."/>
            <person name="Braga V.A."/>
            <person name="Fernandes-Pedrosa M.F."/>
        </authorList>
    </citation>
    <scope>FUNCTION</scope>
    <scope>BIOASSAY</scope>
    <scope>SYNTHESIS OF 36-60</scope>
    <scope>3D-STRUCTURE MODELING</scope>
</reference>
<reference key="3">
    <citation type="journal article" date="2016" name="Toxicon">
        <title>Characterization of TistH, a multifunctional peptide from the scorpion Tityus stigmurus: structure, cytotoxicity and antimicrobial activity.</title>
        <authorList>
            <person name="Machado R.J."/>
            <person name="Estrela A.B."/>
            <person name="Nascimento A.K."/>
            <person name="Melo M.M."/>
            <person name="Torres-Rego M."/>
            <person name="Lima E.O."/>
            <person name="Rocha H.A."/>
            <person name="Carvalho E."/>
            <person name="Silva-Junior A.A."/>
            <person name="Fernandes-Pedrosa M.F."/>
        </authorList>
    </citation>
    <scope>FUNCTION</scope>
    <scope>SYNTHESIS OF 36-60</scope>
    <scope>BIOPHYSICOCHEMICAL PROPERTIES</scope>
    <scope>CIRCULAR DICHROISM ANALYSIS</scope>
</reference>
<reference key="4">
    <citation type="journal article" date="2019" name="Mater. Sci. Eng. C Mater. Biol. Appl.">
        <title>Biodegradable cross-linked chitosan nanoparticles improve anti-Candida and anti-biofilm activity of TistH, a peptide identified in the venom gland of the Tityus stigmurus scorpion.</title>
        <authorList>
            <person name="Torres-Rego M."/>
            <person name="Glaucia-Silva F."/>
            <person name="Rocha Soares K.S."/>
            <person name="de Souza L.B.F.C."/>
            <person name="Damasceno I.Z."/>
            <person name="Santos-Silva E.D."/>
            <person name="Lacerda A.F."/>
            <person name="Chaves G.M."/>
            <person name="Silva-Junior A.A.D."/>
            <person name="Fernandes-Pedrosa M.F."/>
        </authorList>
    </citation>
    <scope>BIOTECHNOLOGY</scope>
</reference>
<comment type="function">
    <text evidence="3 4">Potentiates the hypotensive action of bradykinin (BK) in normotensive rats, and induces a vasorelaxant effect in mesenteric artery rings that is induced by endothelium-dependent release of nitric oxide (NO) (PubMed:25930987). Does not inhibit angiotensin converting enzyme (ACE) (PubMed:25930987). Shows neither hemolytic activity nor cytotoxicity to normal and cancer cells (PubMed:25930987, PubMed:27267248). Shows moderate antimicrobial activity against the fungi Candida albicans and the filamentous fungus Trichophyton rubrum, as well as against the bacteria C.albicans (MIC=128 ug/mL), C.tropicalis (MIC=128 ug/mL) and Aspergillus flavus (MIC=128 ug/mL) (PubMed:27267248). Has no antimicrobial activity against S.aureus, S.epidermidis and P.aeruginosa (PubMed:27267248).</text>
</comment>
<comment type="biophysicochemical properties">
    <phDependence>
        <text evidence="4">Shows stability to pH variations.</text>
    </phDependence>
    <temperatureDependence>
        <text evidence="4">Partially and reversibly loses its structure as temperature increases.</text>
    </temperatureDependence>
</comment>
<comment type="subcellular location">
    <subcellularLocation>
        <location evidence="8">Secreted</location>
    </subcellularLocation>
</comment>
<comment type="tissue specificity">
    <text evidence="8">Expressed by the venom gland.</text>
</comment>
<comment type="biotechnology">
    <text evidence="5">This peptide encapsulated in chitosan nanoparticles shows an improvement of antifungal effects on growth inhibition, viability, and biofilm formation in vitro.</text>
</comment>
<comment type="similarity">
    <text evidence="7">Belongs to the non-disulfide-bridged peptide (NDBP) superfamily.</text>
</comment>
<evidence type="ECO:0000250" key="1">
    <source>
        <dbReference type="UniProtKB" id="P84189"/>
    </source>
</evidence>
<evidence type="ECO:0000255" key="2"/>
<evidence type="ECO:0000269" key="3">
    <source>
    </source>
</evidence>
<evidence type="ECO:0000269" key="4">
    <source>
    </source>
</evidence>
<evidence type="ECO:0000269" key="5">
    <source>
    </source>
</evidence>
<evidence type="ECO:0000303" key="6">
    <source>
    </source>
</evidence>
<evidence type="ECO:0000305" key="7"/>
<evidence type="ECO:0000305" key="8">
    <source>
    </source>
</evidence>
<evidence type="ECO:0000305" key="9">
    <source>
    </source>
</evidence>
<evidence type="ECO:0000312" key="10">
    <source>
        <dbReference type="EMBL" id="JK483714"/>
    </source>
</evidence>
<keyword id="KW-0044">Antibiotic</keyword>
<keyword id="KW-0929">Antimicrobial</keyword>
<keyword id="KW-1222">Bradykinin receptor impairing toxin</keyword>
<keyword id="KW-0295">Fungicide</keyword>
<keyword id="KW-1213">G-protein coupled receptor impairing toxin</keyword>
<keyword id="KW-0382">Hypotensive agent</keyword>
<keyword id="KW-0597">Phosphoprotein</keyword>
<keyword id="KW-0964">Secreted</keyword>
<keyword id="KW-0732">Signal</keyword>
<keyword id="KW-0800">Toxin</keyword>
<proteinExistence type="evidence at protein level"/>
<protein>
    <recommendedName>
        <fullName evidence="6">Hypotensin</fullName>
    </recommendedName>
    <alternativeName>
        <fullName evidence="6">TistH</fullName>
    </alternativeName>
</protein>
<name>NDBH_TITST</name>
<dbReference type="EMBL" id="JK483714">
    <property type="status" value="NOT_ANNOTATED_CDS"/>
    <property type="molecule type" value="mRNA"/>
</dbReference>
<dbReference type="GO" id="GO:0005576">
    <property type="term" value="C:extracellular region"/>
    <property type="evidence" value="ECO:0007669"/>
    <property type="project" value="UniProtKB-SubCell"/>
</dbReference>
<dbReference type="GO" id="GO:0090729">
    <property type="term" value="F:toxin activity"/>
    <property type="evidence" value="ECO:0007669"/>
    <property type="project" value="UniProtKB-KW"/>
</dbReference>
<dbReference type="GO" id="GO:0042742">
    <property type="term" value="P:defense response to bacterium"/>
    <property type="evidence" value="ECO:0007669"/>
    <property type="project" value="UniProtKB-KW"/>
</dbReference>
<dbReference type="GO" id="GO:0050832">
    <property type="term" value="P:defense response to fungus"/>
    <property type="evidence" value="ECO:0007669"/>
    <property type="project" value="UniProtKB-KW"/>
</dbReference>
<dbReference type="GO" id="GO:0031640">
    <property type="term" value="P:killing of cells of another organism"/>
    <property type="evidence" value="ECO:0007669"/>
    <property type="project" value="UniProtKB-KW"/>
</dbReference>
<dbReference type="GO" id="GO:0008217">
    <property type="term" value="P:regulation of blood pressure"/>
    <property type="evidence" value="ECO:0007669"/>
    <property type="project" value="UniProtKB-KW"/>
</dbReference>
<organism>
    <name type="scientific">Tityus stigmurus</name>
    <name type="common">Brazilian scorpion</name>
    <dbReference type="NCBI Taxonomy" id="50344"/>
    <lineage>
        <taxon>Eukaryota</taxon>
        <taxon>Metazoa</taxon>
        <taxon>Ecdysozoa</taxon>
        <taxon>Arthropoda</taxon>
        <taxon>Chelicerata</taxon>
        <taxon>Arachnida</taxon>
        <taxon>Scorpiones</taxon>
        <taxon>Buthida</taxon>
        <taxon>Buthoidea</taxon>
        <taxon>Buthidae</taxon>
        <taxon>Tityus</taxon>
    </lineage>
</organism>
<feature type="signal peptide" evidence="2">
    <location>
        <begin position="1"/>
        <end position="24"/>
    </location>
</feature>
<feature type="propeptide" id="PRO_0000461886" evidence="1">
    <location>
        <begin position="25"/>
        <end position="35"/>
    </location>
</feature>
<feature type="peptide" id="PRO_0000461887" description="Hypotensin" evidence="9">
    <location>
        <begin position="36"/>
        <end position="60"/>
    </location>
</feature>
<feature type="propeptide" id="PRO_0000461888" evidence="1">
    <location>
        <begin position="61"/>
        <end position="72"/>
    </location>
</feature>